<feature type="chain" id="PRO_0000371400" description="Probable polyketide synthase 44">
    <location>
        <begin position="1"/>
        <end position="3078"/>
    </location>
</feature>
<feature type="transmembrane region" description="Helical" evidence="2">
    <location>
        <begin position="2694"/>
        <end position="2714"/>
    </location>
</feature>
<feature type="domain" description="Ketosynthase family 3 (KS3)" evidence="4">
    <location>
        <begin position="10"/>
        <end position="435"/>
    </location>
</feature>
<feature type="domain" description="PKS/mFAS DH" evidence="5">
    <location>
        <begin position="952"/>
        <end position="1239"/>
    </location>
</feature>
<feature type="domain" description="Carrier" evidence="3">
    <location>
        <begin position="2558"/>
        <end position="2636"/>
    </location>
</feature>
<feature type="region of interest" description="Acyl/malonyl transferase">
    <location>
        <begin position="627"/>
        <end position="660"/>
    </location>
</feature>
<feature type="region of interest" description="N-terminal hotdog fold" evidence="5">
    <location>
        <begin position="952"/>
        <end position="1072"/>
    </location>
</feature>
<feature type="region of interest" description="C-terminal hotdog fold" evidence="5">
    <location>
        <begin position="1088"/>
        <end position="1239"/>
    </location>
</feature>
<feature type="region of interest" description="Disordered" evidence="7">
    <location>
        <begin position="2087"/>
        <end position="2108"/>
    </location>
</feature>
<feature type="coiled-coil region" evidence="2">
    <location>
        <begin position="2080"/>
        <end position="2119"/>
    </location>
</feature>
<feature type="compositionally biased region" description="Low complexity" evidence="7">
    <location>
        <begin position="2090"/>
        <end position="2102"/>
    </location>
</feature>
<feature type="active site" description="For beta-ketoacyl synthase activity" evidence="4">
    <location>
        <position position="175"/>
    </location>
</feature>
<feature type="active site" description="For beta-ketoacyl synthase activity" evidence="4">
    <location>
        <position position="320"/>
    </location>
</feature>
<feature type="active site" description="For beta-ketoacyl synthase activity" evidence="4">
    <location>
        <position position="358"/>
    </location>
</feature>
<feature type="active site" description="For acyl/malonyl transferase activity" evidence="6">
    <location>
        <position position="637"/>
    </location>
</feature>
<feature type="active site" description="Proton acceptor; for dehydratase activity" evidence="5">
    <location>
        <position position="984"/>
    </location>
</feature>
<feature type="active site" description="Proton donor; for dehydratase activity" evidence="5">
    <location>
        <position position="1150"/>
    </location>
</feature>
<feature type="modified residue" description="O-(pantetheine 4'-phosphoryl)serine" evidence="3">
    <location>
        <position position="2596"/>
    </location>
</feature>
<protein>
    <recommendedName>
        <fullName>Probable polyketide synthase 44</fullName>
        <shortName>dipks44</shortName>
        <ecNumber>2.3.1.-</ecNumber>
    </recommendedName>
</protein>
<name>PKS44_DICDI</name>
<reference key="1">
    <citation type="journal article" date="2005" name="Nature">
        <title>The genome of the social amoeba Dictyostelium discoideum.</title>
        <authorList>
            <person name="Eichinger L."/>
            <person name="Pachebat J.A."/>
            <person name="Gloeckner G."/>
            <person name="Rajandream M.A."/>
            <person name="Sucgang R."/>
            <person name="Berriman M."/>
            <person name="Song J."/>
            <person name="Olsen R."/>
            <person name="Szafranski K."/>
            <person name="Xu Q."/>
            <person name="Tunggal B."/>
            <person name="Kummerfeld S."/>
            <person name="Madera M."/>
            <person name="Konfortov B.A."/>
            <person name="Rivero F."/>
            <person name="Bankier A.T."/>
            <person name="Lehmann R."/>
            <person name="Hamlin N."/>
            <person name="Davies R."/>
            <person name="Gaudet P."/>
            <person name="Fey P."/>
            <person name="Pilcher K."/>
            <person name="Chen G."/>
            <person name="Saunders D."/>
            <person name="Sodergren E.J."/>
            <person name="Davis P."/>
            <person name="Kerhornou A."/>
            <person name="Nie X."/>
            <person name="Hall N."/>
            <person name="Anjard C."/>
            <person name="Hemphill L."/>
            <person name="Bason N."/>
            <person name="Farbrother P."/>
            <person name="Desany B."/>
            <person name="Just E."/>
            <person name="Morio T."/>
            <person name="Rost R."/>
            <person name="Churcher C.M."/>
            <person name="Cooper J."/>
            <person name="Haydock S."/>
            <person name="van Driessche N."/>
            <person name="Cronin A."/>
            <person name="Goodhead I."/>
            <person name="Muzny D.M."/>
            <person name="Mourier T."/>
            <person name="Pain A."/>
            <person name="Lu M."/>
            <person name="Harper D."/>
            <person name="Lindsay R."/>
            <person name="Hauser H."/>
            <person name="James K.D."/>
            <person name="Quiles M."/>
            <person name="Madan Babu M."/>
            <person name="Saito T."/>
            <person name="Buchrieser C."/>
            <person name="Wardroper A."/>
            <person name="Felder M."/>
            <person name="Thangavelu M."/>
            <person name="Johnson D."/>
            <person name="Knights A."/>
            <person name="Loulseged H."/>
            <person name="Mungall K.L."/>
            <person name="Oliver K."/>
            <person name="Price C."/>
            <person name="Quail M.A."/>
            <person name="Urushihara H."/>
            <person name="Hernandez J."/>
            <person name="Rabbinowitsch E."/>
            <person name="Steffen D."/>
            <person name="Sanders M."/>
            <person name="Ma J."/>
            <person name="Kohara Y."/>
            <person name="Sharp S."/>
            <person name="Simmonds M.N."/>
            <person name="Spiegler S."/>
            <person name="Tivey A."/>
            <person name="Sugano S."/>
            <person name="White B."/>
            <person name="Walker D."/>
            <person name="Woodward J.R."/>
            <person name="Winckler T."/>
            <person name="Tanaka Y."/>
            <person name="Shaulsky G."/>
            <person name="Schleicher M."/>
            <person name="Weinstock G.M."/>
            <person name="Rosenthal A."/>
            <person name="Cox E.C."/>
            <person name="Chisholm R.L."/>
            <person name="Gibbs R.A."/>
            <person name="Loomis W.F."/>
            <person name="Platzer M."/>
            <person name="Kay R.R."/>
            <person name="Williams J.G."/>
            <person name="Dear P.H."/>
            <person name="Noegel A.A."/>
            <person name="Barrell B.G."/>
            <person name="Kuspa A."/>
        </authorList>
    </citation>
    <scope>NUCLEOTIDE SEQUENCE [LARGE SCALE GENOMIC DNA]</scope>
    <source>
        <strain>AX4</strain>
    </source>
</reference>
<reference key="2">
    <citation type="journal article" date="2007" name="Bioinformatics">
        <title>Polyketide synthase genes and the natural products potential of Dictyostelium discoideum.</title>
        <authorList>
            <person name="Zucko J."/>
            <person name="Skunca N."/>
            <person name="Curk T."/>
            <person name="Zupan B."/>
            <person name="Long P.F."/>
            <person name="Cullum J."/>
            <person name="Kessin R.H."/>
            <person name="Hranueli D."/>
        </authorList>
    </citation>
    <scope>IDENTIFICATION</scope>
</reference>
<evidence type="ECO:0000250" key="1"/>
<evidence type="ECO:0000255" key="2"/>
<evidence type="ECO:0000255" key="3">
    <source>
        <dbReference type="PROSITE-ProRule" id="PRU00258"/>
    </source>
</evidence>
<evidence type="ECO:0000255" key="4">
    <source>
        <dbReference type="PROSITE-ProRule" id="PRU01348"/>
    </source>
</evidence>
<evidence type="ECO:0000255" key="5">
    <source>
        <dbReference type="PROSITE-ProRule" id="PRU01363"/>
    </source>
</evidence>
<evidence type="ECO:0000255" key="6">
    <source>
        <dbReference type="PROSITE-ProRule" id="PRU10022"/>
    </source>
</evidence>
<evidence type="ECO:0000256" key="7">
    <source>
        <dbReference type="SAM" id="MobiDB-lite"/>
    </source>
</evidence>
<evidence type="ECO:0000305" key="8"/>
<sequence length="3078" mass="348031">MENQNIKYGDNDVAIIGIGLRLPNSINKPLELWEGLLAGFDGIVETTNRWSDSFSAMDEISSKYAGLIDLDEWMSFDPLFFGIIPTEVPSIDPQQRLLLKCTWEAFEDANIDPFKLRGTNTSVYVGASSLDYASINVDFDETPMNIFNSNMSGISNRISYCYDFRGTSLTIDTACSSSLNAVHLGYKSIINGESDYSIVGGCNFIMSPHTSRSFESINVTSKTGKSKAFDQDANGFVRSEGVVSIILKKMSKAIQDGDQIYSVIKGTNSNVDGNLNKGNFFAPSKQSQANNIKSAMESCNKETTNSTPIALNDIDFFELHGTSTQIGDPIECEGVSSVFKESREKPLLIGSIKANIGHLEPASGVASLAKVALMFKHRQFVKNINFDKPNPNIKFDEWKIKVCTENTPFPNNKKVSIAINSFGITGSNACLILTEYIKPKTTTTTTANNNGNQKYLIPISANSKSSLESYKEKLINSSKEFSETINFKDFVKYQLDSKTLKLTQRSVIIASNWEEAGSTQSIVTTNTNRSGNIIKDANKNPQLVFVFSGQGPQWSKMFTQLYDQEPIFKQKTDQIDSLLSKHYGYSILNKLNSIKDDDTVTINEPILAQPSVFMIQMALIELYKHWGILASISIGHSLGEVSSAVCSGMIDLETGCFIIYHRSRLQQQTVGSGRMLVASLNEQQFNQEFQQKYPSIEISCFNSPFSIVLAGKESELQEISNILKEKETFSIFLSTQSSFHSSSQEPIKDELLKQLKDIKSTKSNIPNFSTVTSNLFNDNDDDEVVQQPDEASSHNSTTTLFDSNYVYENVRKPVQFEKAIKNVFNYIEKKGLGSSVIFLEISASPVLGNYIREMIPQDSNYFFIEDQTISVLSSLNKKNKDQVLEIQTSISQLYCKGYNVNFNCSNQTKSLDFKNTGYKQLSDVLFKYSWDDESYWSVSPLISNYIKNGPATNHLGYRNERQPYQSFTSSIDIKKEPFEFLKGHSSRNRVIYPGCGYIDSILKAFPDQDLTIQSMEYKSAILLSSSMKTYLSTNIIPSGKNEYRVSFHYKDKKTNKWILSCSGRLSTTKHNDEVVKKVDIEKLKSKCNFVTIQKKELYETIKYKAQLTLEGKFQSIEEVSYGHNCCLSKVPLTTLSSYDNESFLNLCVIDAAFQPLGAVKENQEPMVFASIENLKFFSKNIPKSAEDREKYKFVYTYTQVKEKKCGSYFVSILTMLQDGTILFFSPLVVYTQLTPYKNQYIIESPNDNLYKICYQSKDSTLPHPLLLKDKFDQPRFETTDKQSQVIKKALSNCLFAIFKRNNNLFTKVEVKSQSIDYLIEKYCLIIDNDDDNDGIDDNSILVNGGVASIDDMVLASTTGKETTIVNNGKRSLAKLIFQILKSNVDLIDWNNIATYTKNISKQQLNIIQAIGNLIVTPLSVTNQVTESDLISKTQLDIINNRMKIKQYELISNTIATDLIKPIINNSILFRILEINSGFGYLSEMIINKINQLLIEFESSYEIEIEFTFTLNGTNQDDNKEISNSIKEKLTNLLISKSSISIIFKELNLNESFLEQKFNPSYYDLIVLTNLSTITNLNESIEFINSILYPNGHLIIIDTKNQSNFQDYEIFEQFLIFDNFGGGIVDDNIDWVKIFQDNNINRVVATPNIKPHVIQVQKSKLYEKVMGTLDDITGPYDQIIIIGYQLQGTDEDNFQSPIMDINKQGTDIYRIKTIEEFEKHCSTIPPTDKSILFFISAMNNLSLENYKQVNFDYIKINQYLLANKLGSLFILATKSALKESTNALAASLIGSFRYFSEFSNILNLYSFDFGEDVYTLSKEISLKWLNMAIDLLDPNKHIQREYIFRNGNETWFERIGKIKRVKSKYQSKSYLDDKEDSLVARLDQNLEYQLEAKQSNLKENEIEVQVVATGINFKDSLIFRNLVPPVLANHEGDFSKPEFGFECSGIVSRIGSKVKKFKVGDSVLGISWKSTSSHAINYQDAFVLKPDNISFVEAASIPIVYCTSFYSLFYSGNLSIKNNESVLIHQASGGIGLACLNILKSCGFKSKLYVTVGSKEKEDYLRETYGDFITGIYSSRNTDFLENIKTDLSNKNDNNNNNNNNNNDNKESNIKELLDNDDDEILPFIHKKGVDLIINTLPFEFLDTNFLLLGQGGRIVDLSVTHLNNNDTTDFSKFKWFIGYSTVEIFYNGFEKSKHILQLITDMIKNKELPLIPIKEYPINQIKDAIDFIGQRKHIGKIVINHKLGLRDGCSNLVQDTIKSLQNHLKDNYLVASPDFKFMGDSLGKTILLTGQTGLSLSIAQACLLNNYQDLEGIIVISKSPIKHELQYLISLAKYLSRKTRVHFKQADCSKFDEMRKVISEIYEKDDPKLSPVESIFHNAFVPVMSEPQDIDMKHIDDAYDAKTTGAMNLYMLMSMYDWKLKNFFFSSSITSVSGSSRQAGYCGANLVLESMAKVIQSQGIRCSTICWGIIGDTGYVSRNESVAKFLNGLGNAPMPLNMVLGSLDLLLQQPTLSTDTTIIASFDFNNLPKLSRDGSNNISYKFDYFTNPIQSNQNNCSSDDLSIREQILAKFSEFLSVDDQSKINLDIKLLDYGADSMVIVELKNYLDKTYTPNILSIQQLQNITINQLIQSVTDAMNKLNGNENKSIKKSNKLVQQKQIDWVKEIKLDSSIKPTDEMIKLFKQLQQQASTTTSNTVFLTGSSGFIGIYILFYLIKSVNCKIVYCLIRRKTIEEATTFLIEFLKVHQLYNQLTTDEINKIKPVLGDYTLDSFGLSVDQYTNISNNVDLIINSAASVNYQMGYEDSKVESVEGVLQCLRFSCHNKLKKLFQVSTLGIYSDDKRDNLDDYTFAQIDPKIIQSKNSIINGYLQGKIVSEYHIKEAANRGIPCCIIRLPFIGPNPNTGVGRDLDLFQTLFQSCYAMSTYPKQESGLQFYATPVTWAAQNLSFISLNPKCWSTSSNHPSSISENLTCYSLFGESICFNVLLTELATQLKWKPTSSGEFLKKLRSFPNEPSCKKLHIVLKNTKNLLLNVYIPGNYKLNPTLKQLLQSNNTYEGWKITPEMILTHLSFIFKKKLNK</sequence>
<comment type="function">
    <text evidence="1">Probable polyketide synthase.</text>
</comment>
<comment type="cofactor">
    <cofactor evidence="1">
        <name>pantetheine 4'-phosphate</name>
        <dbReference type="ChEBI" id="CHEBI:47942"/>
    </cofactor>
    <text evidence="1">Binds 1 phosphopantetheine covalently.</text>
</comment>
<comment type="subcellular location">
    <subcellularLocation>
        <location evidence="8">Membrane</location>
        <topology evidence="8">Single-pass membrane protein</topology>
    </subcellularLocation>
</comment>
<comment type="domain">
    <text evidence="1">Modular protein that is responsible for the completion of one condensation-processing cycle. The beta-ketoacyl synthase region is responsible for the actual condensation reaction while the acyl/malonyl transferase region is responsible for incorporating carboxylic acids units onto an acyl carrier protein (ACP) domain (By similarity).</text>
</comment>
<comment type="miscellaneous">
    <text>Encoded by one of the numerous copies of polyketide synthase genes and clustered as a pair pks44/pks45 in chromosome 6.</text>
</comment>
<organism>
    <name type="scientific">Dictyostelium discoideum</name>
    <name type="common">Social amoeba</name>
    <dbReference type="NCBI Taxonomy" id="44689"/>
    <lineage>
        <taxon>Eukaryota</taxon>
        <taxon>Amoebozoa</taxon>
        <taxon>Evosea</taxon>
        <taxon>Eumycetozoa</taxon>
        <taxon>Dictyostelia</taxon>
        <taxon>Dictyosteliales</taxon>
        <taxon>Dictyosteliaceae</taxon>
        <taxon>Dictyostelium</taxon>
    </lineage>
</organism>
<accession>Q54B51</accession>
<dbReference type="EC" id="2.3.1.-"/>
<dbReference type="EMBL" id="AAFI02000224">
    <property type="protein sequence ID" value="EAL60450.1"/>
    <property type="molecule type" value="Genomic_DNA"/>
</dbReference>
<dbReference type="RefSeq" id="XP_628865.1">
    <property type="nucleotide sequence ID" value="XM_628863.1"/>
</dbReference>
<dbReference type="SMR" id="Q54B51"/>
<dbReference type="FunCoup" id="Q54B51">
    <property type="interactions" value="3"/>
</dbReference>
<dbReference type="STRING" id="44689.Q54B51"/>
<dbReference type="PaxDb" id="44689-DDB0230077"/>
<dbReference type="EnsemblProtists" id="EAL60450">
    <property type="protein sequence ID" value="EAL60450"/>
    <property type="gene ID" value="DDB_G0293902"/>
</dbReference>
<dbReference type="GeneID" id="8629480"/>
<dbReference type="KEGG" id="ddi:DDB_G0293902"/>
<dbReference type="dictyBase" id="DDB_G0293902">
    <property type="gene designation" value="pks44"/>
</dbReference>
<dbReference type="VEuPathDB" id="AmoebaDB:DDB_G0293902"/>
<dbReference type="eggNOG" id="KOG1178">
    <property type="taxonomic scope" value="Eukaryota"/>
</dbReference>
<dbReference type="eggNOG" id="KOG1202">
    <property type="taxonomic scope" value="Eukaryota"/>
</dbReference>
<dbReference type="HOGENOM" id="CLU_000022_31_0_1"/>
<dbReference type="InParanoid" id="Q54B51"/>
<dbReference type="OMA" id="STPICVA"/>
<dbReference type="PhylomeDB" id="Q54B51"/>
<dbReference type="PRO" id="PR:Q54B51"/>
<dbReference type="Proteomes" id="UP000002195">
    <property type="component" value="Chromosome 6"/>
</dbReference>
<dbReference type="GO" id="GO:0016020">
    <property type="term" value="C:membrane"/>
    <property type="evidence" value="ECO:0007669"/>
    <property type="project" value="UniProtKB-SubCell"/>
</dbReference>
<dbReference type="GO" id="GO:0004315">
    <property type="term" value="F:3-oxoacyl-[acyl-carrier-protein] synthase activity"/>
    <property type="evidence" value="ECO:0007669"/>
    <property type="project" value="InterPro"/>
</dbReference>
<dbReference type="GO" id="GO:0016491">
    <property type="term" value="F:oxidoreductase activity"/>
    <property type="evidence" value="ECO:0007669"/>
    <property type="project" value="InterPro"/>
</dbReference>
<dbReference type="GO" id="GO:0006633">
    <property type="term" value="P:fatty acid biosynthetic process"/>
    <property type="evidence" value="ECO:0000318"/>
    <property type="project" value="GO_Central"/>
</dbReference>
<dbReference type="CDD" id="cd05195">
    <property type="entry name" value="enoyl_red"/>
    <property type="match status" value="1"/>
</dbReference>
<dbReference type="CDD" id="cd00833">
    <property type="entry name" value="PKS"/>
    <property type="match status" value="1"/>
</dbReference>
<dbReference type="CDD" id="cd05235">
    <property type="entry name" value="SDR_e1"/>
    <property type="match status" value="1"/>
</dbReference>
<dbReference type="Gene3D" id="3.30.70.3290">
    <property type="match status" value="1"/>
</dbReference>
<dbReference type="Gene3D" id="3.40.47.10">
    <property type="match status" value="1"/>
</dbReference>
<dbReference type="Gene3D" id="1.10.1200.10">
    <property type="entry name" value="ACP-like"/>
    <property type="match status" value="1"/>
</dbReference>
<dbReference type="Gene3D" id="3.40.366.10">
    <property type="entry name" value="Malonyl-Coenzyme A Acyl Carrier Protein, domain 2"/>
    <property type="match status" value="1"/>
</dbReference>
<dbReference type="Gene3D" id="3.90.180.10">
    <property type="entry name" value="Medium-chain alcohol dehydrogenases, catalytic domain"/>
    <property type="match status" value="2"/>
</dbReference>
<dbReference type="Gene3D" id="3.40.50.720">
    <property type="entry name" value="NAD(P)-binding Rossmann-like Domain"/>
    <property type="match status" value="3"/>
</dbReference>
<dbReference type="Gene3D" id="3.10.129.110">
    <property type="entry name" value="Polyketide synthase dehydratase"/>
    <property type="match status" value="1"/>
</dbReference>
<dbReference type="Gene3D" id="3.40.50.150">
    <property type="entry name" value="Vaccinia Virus protein VP39"/>
    <property type="match status" value="1"/>
</dbReference>
<dbReference type="InterPro" id="IPR001227">
    <property type="entry name" value="Ac_transferase_dom_sf"/>
</dbReference>
<dbReference type="InterPro" id="IPR036736">
    <property type="entry name" value="ACP-like_sf"/>
</dbReference>
<dbReference type="InterPro" id="IPR014043">
    <property type="entry name" value="Acyl_transferase_dom"/>
</dbReference>
<dbReference type="InterPro" id="IPR016035">
    <property type="entry name" value="Acyl_Trfase/lysoPLipase"/>
</dbReference>
<dbReference type="InterPro" id="IPR013154">
    <property type="entry name" value="ADH-like_N"/>
</dbReference>
<dbReference type="InterPro" id="IPR013120">
    <property type="entry name" value="Far_NAD-bd"/>
</dbReference>
<dbReference type="InterPro" id="IPR011032">
    <property type="entry name" value="GroES-like_sf"/>
</dbReference>
<dbReference type="InterPro" id="IPR018201">
    <property type="entry name" value="Ketoacyl_synth_AS"/>
</dbReference>
<dbReference type="InterPro" id="IPR014031">
    <property type="entry name" value="Ketoacyl_synth_C"/>
</dbReference>
<dbReference type="InterPro" id="IPR014030">
    <property type="entry name" value="Ketoacyl_synth_N"/>
</dbReference>
<dbReference type="InterPro" id="IPR016036">
    <property type="entry name" value="Malonyl_transacylase_ACP-bd"/>
</dbReference>
<dbReference type="InterPro" id="IPR036291">
    <property type="entry name" value="NAD(P)-bd_dom_sf"/>
</dbReference>
<dbReference type="InterPro" id="IPR032821">
    <property type="entry name" value="PKS_assoc"/>
</dbReference>
<dbReference type="InterPro" id="IPR020841">
    <property type="entry name" value="PKS_Beta-ketoAc_synthase_dom"/>
</dbReference>
<dbReference type="InterPro" id="IPR042104">
    <property type="entry name" value="PKS_dehydratase_sf"/>
</dbReference>
<dbReference type="InterPro" id="IPR020843">
    <property type="entry name" value="PKS_ER"/>
</dbReference>
<dbReference type="InterPro" id="IPR013968">
    <property type="entry name" value="PKS_KR"/>
</dbReference>
<dbReference type="InterPro" id="IPR049900">
    <property type="entry name" value="PKS_mFAS_DH"/>
</dbReference>
<dbReference type="InterPro" id="IPR050444">
    <property type="entry name" value="Polyketide_Synthase"/>
</dbReference>
<dbReference type="InterPro" id="IPR009081">
    <property type="entry name" value="PP-bd_ACP"/>
</dbReference>
<dbReference type="InterPro" id="IPR029063">
    <property type="entry name" value="SAM-dependent_MTases_sf"/>
</dbReference>
<dbReference type="InterPro" id="IPR010080">
    <property type="entry name" value="Thioester_reductase-like_dom"/>
</dbReference>
<dbReference type="InterPro" id="IPR016039">
    <property type="entry name" value="Thiolase-like"/>
</dbReference>
<dbReference type="PANTHER" id="PTHR45681:SF1">
    <property type="entry name" value="POLYKETIDE SYNTHASE 2-RELATED"/>
    <property type="match status" value="1"/>
</dbReference>
<dbReference type="PANTHER" id="PTHR45681">
    <property type="entry name" value="POLYKETIDE SYNTHASE 44-RELATED"/>
    <property type="match status" value="1"/>
</dbReference>
<dbReference type="Pfam" id="PF23297">
    <property type="entry name" value="ACP_SdgA_C"/>
    <property type="match status" value="1"/>
</dbReference>
<dbReference type="Pfam" id="PF00698">
    <property type="entry name" value="Acyl_transf_1"/>
    <property type="match status" value="1"/>
</dbReference>
<dbReference type="Pfam" id="PF08240">
    <property type="entry name" value="ADH_N"/>
    <property type="match status" value="1"/>
</dbReference>
<dbReference type="Pfam" id="PF13602">
    <property type="entry name" value="ADH_zinc_N_2"/>
    <property type="match status" value="1"/>
</dbReference>
<dbReference type="Pfam" id="PF16197">
    <property type="entry name" value="KAsynt_C_assoc"/>
    <property type="match status" value="1"/>
</dbReference>
<dbReference type="Pfam" id="PF00109">
    <property type="entry name" value="ketoacyl-synt"/>
    <property type="match status" value="1"/>
</dbReference>
<dbReference type="Pfam" id="PF02801">
    <property type="entry name" value="Ketoacyl-synt_C"/>
    <property type="match status" value="1"/>
</dbReference>
<dbReference type="Pfam" id="PF08659">
    <property type="entry name" value="KR"/>
    <property type="match status" value="1"/>
</dbReference>
<dbReference type="Pfam" id="PF07993">
    <property type="entry name" value="NAD_binding_4"/>
    <property type="match status" value="1"/>
</dbReference>
<dbReference type="SMART" id="SM00827">
    <property type="entry name" value="PKS_AT"/>
    <property type="match status" value="1"/>
</dbReference>
<dbReference type="SMART" id="SM00829">
    <property type="entry name" value="PKS_ER"/>
    <property type="match status" value="1"/>
</dbReference>
<dbReference type="SMART" id="SM00822">
    <property type="entry name" value="PKS_KR"/>
    <property type="match status" value="1"/>
</dbReference>
<dbReference type="SMART" id="SM00825">
    <property type="entry name" value="PKS_KS"/>
    <property type="match status" value="1"/>
</dbReference>
<dbReference type="SUPFAM" id="SSF47336">
    <property type="entry name" value="ACP-like"/>
    <property type="match status" value="1"/>
</dbReference>
<dbReference type="SUPFAM" id="SSF52151">
    <property type="entry name" value="FabD/lysophospholipase-like"/>
    <property type="match status" value="1"/>
</dbReference>
<dbReference type="SUPFAM" id="SSF50129">
    <property type="entry name" value="GroES-like"/>
    <property type="match status" value="1"/>
</dbReference>
<dbReference type="SUPFAM" id="SSF51735">
    <property type="entry name" value="NAD(P)-binding Rossmann-fold domains"/>
    <property type="match status" value="3"/>
</dbReference>
<dbReference type="SUPFAM" id="SSF55048">
    <property type="entry name" value="Probable ACP-binding domain of malonyl-CoA ACP transacylase"/>
    <property type="match status" value="1"/>
</dbReference>
<dbReference type="SUPFAM" id="SSF53335">
    <property type="entry name" value="S-adenosyl-L-methionine-dependent methyltransferases"/>
    <property type="match status" value="1"/>
</dbReference>
<dbReference type="SUPFAM" id="SSF53901">
    <property type="entry name" value="Thiolase-like"/>
    <property type="match status" value="1"/>
</dbReference>
<dbReference type="PROSITE" id="PS50075">
    <property type="entry name" value="CARRIER"/>
    <property type="match status" value="1"/>
</dbReference>
<dbReference type="PROSITE" id="PS00606">
    <property type="entry name" value="KS3_1"/>
    <property type="match status" value="1"/>
</dbReference>
<dbReference type="PROSITE" id="PS52004">
    <property type="entry name" value="KS3_2"/>
    <property type="match status" value="1"/>
</dbReference>
<dbReference type="PROSITE" id="PS52019">
    <property type="entry name" value="PKS_MFAS_DH"/>
    <property type="match status" value="1"/>
</dbReference>
<proteinExistence type="inferred from homology"/>
<gene>
    <name type="primary">pks44</name>
    <name type="ORF">DDB_G0293902</name>
</gene>
<keyword id="KW-0175">Coiled coil</keyword>
<keyword id="KW-0472">Membrane</keyword>
<keyword id="KW-0596">Phosphopantetheine</keyword>
<keyword id="KW-0597">Phosphoprotein</keyword>
<keyword id="KW-1185">Reference proteome</keyword>
<keyword id="KW-0808">Transferase</keyword>
<keyword id="KW-0812">Transmembrane</keyword>
<keyword id="KW-1133">Transmembrane helix</keyword>